<dbReference type="EMBL" id="D00295">
    <property type="protein sequence ID" value="BAA00193.1"/>
    <property type="molecule type" value="Genomic_DNA"/>
</dbReference>
<dbReference type="EMBL" id="AF198100">
    <property type="protein sequence ID" value="AAF44601.1"/>
    <property type="molecule type" value="Genomic_DNA"/>
</dbReference>
<dbReference type="EMBL" id="AF198100">
    <property type="protein sequence ID" value="AAF44613.1"/>
    <property type="molecule type" value="Genomic_DNA"/>
</dbReference>
<dbReference type="PIR" id="JT0456">
    <property type="entry name" value="JT0456"/>
</dbReference>
<dbReference type="RefSeq" id="NP_038972.1">
    <property type="nucleotide sequence ID" value="NC_002188.1"/>
</dbReference>
<dbReference type="RefSeq" id="NP_039215.1">
    <property type="nucleotide sequence ID" value="NC_002188.1"/>
</dbReference>
<dbReference type="GeneID" id="1486829"/>
<dbReference type="GeneID" id="1486841"/>
<dbReference type="KEGG" id="vg:1486829"/>
<dbReference type="KEGG" id="vg:1486841"/>
<dbReference type="Proteomes" id="UP000008597">
    <property type="component" value="Segment"/>
</dbReference>
<keyword id="KW-0244">Early protein</keyword>
<keyword id="KW-1185">Reference proteome</keyword>
<proteinExistence type="predicted"/>
<organismHost>
    <name type="scientific">Vertebrata</name>
    <dbReference type="NCBI Taxonomy" id="7742"/>
</organismHost>
<sequence length="66" mass="7791">MNKALMIFVYYLTRVTLSKCLVYFTKERYVLKKIDTPIGIPNTCVRFTTSFLYNSILYVLVNRKSV</sequence>
<gene>
    <name type="ordered locus">FPV009</name>
</gene>
<gene>
    <name type="ordered locus">FPV252</name>
</gene>
<protein>
    <recommendedName>
        <fullName>Uncharacterized protein FPV009/FPV252</fullName>
    </recommendedName>
    <alternativeName>
        <fullName>ORF b</fullName>
    </alternativeName>
</protein>
<organism>
    <name type="scientific">Fowlpox virus (strain NVSL)</name>
    <name type="common">FPV</name>
    <dbReference type="NCBI Taxonomy" id="928301"/>
    <lineage>
        <taxon>Viruses</taxon>
        <taxon>Varidnaviria</taxon>
        <taxon>Bamfordvirae</taxon>
        <taxon>Nucleocytoviricota</taxon>
        <taxon>Pokkesviricetes</taxon>
        <taxon>Chitovirales</taxon>
        <taxon>Poxviridae</taxon>
        <taxon>Chordopoxvirinae</taxon>
        <taxon>Avipoxvirus</taxon>
        <taxon>Fowlpox virus</taxon>
    </lineage>
</organism>
<name>V009_FOWPN</name>
<reference key="1">
    <citation type="journal article" date="1988" name="J. Gen. Virol.">
        <title>Sequence analysis of an 11.2 kilobase, near-terminal, BamHI fragment of fowlpox virus.</title>
        <authorList>
            <person name="Tomley F."/>
            <person name="Binns M."/>
            <person name="Campbell J."/>
            <person name="Boursnell M.E.G."/>
        </authorList>
    </citation>
    <scope>NUCLEOTIDE SEQUENCE [GENOMIC DNA]</scope>
    <source>
        <strain>FP-9 / Isolate HP-438</strain>
    </source>
</reference>
<reference key="2">
    <citation type="journal article" date="2000" name="J. Virol.">
        <title>The genome of fowlpox virus.</title>
        <authorList>
            <person name="Afonso C.L."/>
            <person name="Tulman E.R."/>
            <person name="Lu Z."/>
            <person name="Zsak L."/>
            <person name="Kutish G.F."/>
            <person name="Rock D.L."/>
        </authorList>
    </citation>
    <scope>NUCLEOTIDE SEQUENCE [LARGE SCALE GENOMIC DNA]</scope>
</reference>
<accession>Q9YPK0</accession>
<feature type="chain" id="PRO_0000099726" description="Uncharacterized protein FPV009/FPV252">
    <location>
        <begin position="1"/>
        <end position="66"/>
    </location>
</feature>